<gene>
    <name evidence="1" type="primary">yabA</name>
    <name type="ordered locus">BPUM_0017</name>
</gene>
<comment type="function">
    <text evidence="1">Involved in control of chromosome replication initiation. Inhibits the cooperative binding of DnaA to the oriC region, thus negatively regulating initiation of chromosome replication. Inhibits the ability of DnaA-ATP to form a helix on DNA; does not disassemble preformed DnaA-DNA helices. Decreases the residence time of DnaA on the chromosome at its binding sites (oriC, replication forks and promoter-binding sites). Tethers DnaA to the replication machinery via the DNA polymerase beta sliding clamp subunit (dnaN). Associates with oriC and other DnaA targets on the chromosome in a DnaA-dependent manner.</text>
</comment>
<comment type="cofactor">
    <cofactor evidence="1">
        <name>Zn(2+)</name>
        <dbReference type="ChEBI" id="CHEBI:29105"/>
    </cofactor>
    <text evidence="1">Binds 1 zinc ion per subunit.</text>
</comment>
<comment type="subunit">
    <text evidence="1">Homotetramer. Interacts with both DnaA and DnaN, acting as a bridge between these two proteins.</text>
</comment>
<comment type="subcellular location">
    <subcellularLocation>
        <location evidence="1">Cytoplasm</location>
        <location evidence="1">Nucleoid</location>
    </subcellularLocation>
    <text evidence="1">Localizes in tight foci, which correspond to the replisome at mid-cell throughout the cell cycle.</text>
</comment>
<comment type="similarity">
    <text evidence="1">Belongs to the YabA family.</text>
</comment>
<accession>A8F900</accession>
<reference key="1">
    <citation type="journal article" date="2007" name="PLoS ONE">
        <title>Paradoxical DNA repair and peroxide resistance gene conservation in Bacillus pumilus SAFR-032.</title>
        <authorList>
            <person name="Gioia J."/>
            <person name="Yerrapragada S."/>
            <person name="Qin X."/>
            <person name="Jiang H."/>
            <person name="Igboeli O.C."/>
            <person name="Muzny D."/>
            <person name="Dugan-Rocha S."/>
            <person name="Ding Y."/>
            <person name="Hawes A."/>
            <person name="Liu W."/>
            <person name="Perez L."/>
            <person name="Kovar C."/>
            <person name="Dinh H."/>
            <person name="Lee S."/>
            <person name="Nazareth L."/>
            <person name="Blyth P."/>
            <person name="Holder M."/>
            <person name="Buhay C."/>
            <person name="Tirumalai M.R."/>
            <person name="Liu Y."/>
            <person name="Dasgupta I."/>
            <person name="Bokhetache L."/>
            <person name="Fujita M."/>
            <person name="Karouia F."/>
            <person name="Eswara Moorthy P."/>
            <person name="Siefert J."/>
            <person name="Uzman A."/>
            <person name="Buzumbo P."/>
            <person name="Verma A."/>
            <person name="Zwiya H."/>
            <person name="McWilliams B.D."/>
            <person name="Olowu A."/>
            <person name="Clinkenbeard K.D."/>
            <person name="Newcombe D."/>
            <person name="Golebiewski L."/>
            <person name="Petrosino J.F."/>
            <person name="Nicholson W.L."/>
            <person name="Fox G.E."/>
            <person name="Venkateswaran K."/>
            <person name="Highlander S.K."/>
            <person name="Weinstock G.M."/>
        </authorList>
    </citation>
    <scope>NUCLEOTIDE SEQUENCE [LARGE SCALE GENOMIC DNA]</scope>
    <source>
        <strain>SAFR-032</strain>
    </source>
</reference>
<evidence type="ECO:0000255" key="1">
    <source>
        <dbReference type="HAMAP-Rule" id="MF_01159"/>
    </source>
</evidence>
<evidence type="ECO:0000256" key="2">
    <source>
        <dbReference type="SAM" id="MobiDB-lite"/>
    </source>
</evidence>
<proteinExistence type="inferred from homology"/>
<dbReference type="EMBL" id="CP000813">
    <property type="protein sequence ID" value="ABV60717.1"/>
    <property type="molecule type" value="Genomic_DNA"/>
</dbReference>
<dbReference type="RefSeq" id="WP_003217957.1">
    <property type="nucleotide sequence ID" value="NZ_VEIS01000022.1"/>
</dbReference>
<dbReference type="SMR" id="A8F900"/>
<dbReference type="STRING" id="315750.BPUM_0017"/>
<dbReference type="GeneID" id="5619254"/>
<dbReference type="KEGG" id="bpu:BPUM_0017"/>
<dbReference type="eggNOG" id="COG4467">
    <property type="taxonomic scope" value="Bacteria"/>
</dbReference>
<dbReference type="HOGENOM" id="CLU_157169_0_0_9"/>
<dbReference type="OrthoDB" id="2112130at2"/>
<dbReference type="Proteomes" id="UP000001355">
    <property type="component" value="Chromosome"/>
</dbReference>
<dbReference type="GO" id="GO:0009295">
    <property type="term" value="C:nucleoid"/>
    <property type="evidence" value="ECO:0007669"/>
    <property type="project" value="UniProtKB-SubCell"/>
</dbReference>
<dbReference type="GO" id="GO:0006260">
    <property type="term" value="P:DNA replication"/>
    <property type="evidence" value="ECO:0007669"/>
    <property type="project" value="UniProtKB-UniRule"/>
</dbReference>
<dbReference type="HAMAP" id="MF_01159">
    <property type="entry name" value="YabA"/>
    <property type="match status" value="1"/>
</dbReference>
<dbReference type="InterPro" id="IPR010377">
    <property type="entry name" value="YabA"/>
</dbReference>
<dbReference type="NCBIfam" id="NF009644">
    <property type="entry name" value="PRK13169.1-5"/>
    <property type="match status" value="1"/>
</dbReference>
<dbReference type="Pfam" id="PF06156">
    <property type="entry name" value="YabA"/>
    <property type="match status" value="1"/>
</dbReference>
<dbReference type="PIRSF" id="PIRSF021439">
    <property type="entry name" value="DUF972"/>
    <property type="match status" value="1"/>
</dbReference>
<feature type="chain" id="PRO_1000065575" description="Replication initiation control protein YabA">
    <location>
        <begin position="1"/>
        <end position="117"/>
    </location>
</feature>
<feature type="region of interest" description="Disordered" evidence="2">
    <location>
        <begin position="45"/>
        <end position="81"/>
    </location>
</feature>
<feature type="compositionally biased region" description="Basic and acidic residues" evidence="2">
    <location>
        <begin position="46"/>
        <end position="62"/>
    </location>
</feature>
<feature type="compositionally biased region" description="Basic and acidic residues" evidence="2">
    <location>
        <begin position="72"/>
        <end position="81"/>
    </location>
</feature>
<feature type="binding site" evidence="1">
    <location>
        <position position="92"/>
    </location>
    <ligand>
        <name>Zn(2+)</name>
        <dbReference type="ChEBI" id="CHEBI:29105"/>
    </ligand>
</feature>
<feature type="binding site" evidence="1">
    <location>
        <position position="94"/>
    </location>
    <ligand>
        <name>Zn(2+)</name>
        <dbReference type="ChEBI" id="CHEBI:29105"/>
    </ligand>
</feature>
<feature type="binding site" evidence="1">
    <location>
        <position position="107"/>
    </location>
    <ligand>
        <name>Zn(2+)</name>
        <dbReference type="ChEBI" id="CHEBI:29105"/>
    </ligand>
</feature>
<feature type="binding site" evidence="1">
    <location>
        <position position="110"/>
    </location>
    <ligand>
        <name>Zn(2+)</name>
        <dbReference type="ChEBI" id="CHEBI:29105"/>
    </ligand>
</feature>
<organism>
    <name type="scientific">Bacillus pumilus (strain SAFR-032)</name>
    <dbReference type="NCBI Taxonomy" id="315750"/>
    <lineage>
        <taxon>Bacteria</taxon>
        <taxon>Bacillati</taxon>
        <taxon>Bacillota</taxon>
        <taxon>Bacilli</taxon>
        <taxon>Bacillales</taxon>
        <taxon>Bacillaceae</taxon>
        <taxon>Bacillus</taxon>
    </lineage>
</organism>
<keyword id="KW-0963">Cytoplasm</keyword>
<keyword id="KW-0235">DNA replication</keyword>
<keyword id="KW-0236">DNA replication inhibitor</keyword>
<keyword id="KW-0479">Metal-binding</keyword>
<keyword id="KW-0862">Zinc</keyword>
<sequence length="117" mass="13570">MDKKELFDTVINLEEQIGSLYRQLGDLKNHIGEVIEENHQLQMENQHLRERLDQSDRDKSSETENDSAQKPGHSDIGEGHDNLARLYQEGFHICNVHYGSIRKEGDCLFCLSFLNKK</sequence>
<protein>
    <recommendedName>
        <fullName evidence="1">Replication initiation control protein YabA</fullName>
    </recommendedName>
</protein>
<name>YABA_BACP2</name>